<feature type="chain" id="PRO_0000095454" description="Glutamate racemase 2">
    <location>
        <begin position="1"/>
        <end position="265"/>
    </location>
</feature>
<feature type="active site" description="Proton donor/acceptor" evidence="1">
    <location>
        <position position="70"/>
    </location>
</feature>
<feature type="active site" description="Proton donor/acceptor" evidence="1">
    <location>
        <position position="182"/>
    </location>
</feature>
<feature type="binding site" evidence="1">
    <location>
        <begin position="7"/>
        <end position="8"/>
    </location>
    <ligand>
        <name>substrate</name>
    </ligand>
</feature>
<feature type="binding site" evidence="1">
    <location>
        <begin position="39"/>
        <end position="40"/>
    </location>
    <ligand>
        <name>substrate</name>
    </ligand>
</feature>
<feature type="binding site" evidence="1">
    <location>
        <begin position="71"/>
        <end position="72"/>
    </location>
    <ligand>
        <name>substrate</name>
    </ligand>
</feature>
<feature type="binding site" evidence="1">
    <location>
        <begin position="183"/>
        <end position="184"/>
    </location>
    <ligand>
        <name>substrate</name>
    </ligand>
</feature>
<comment type="function">
    <text evidence="1">Provides the (R)-glutamate required for cell wall biosynthesis.</text>
</comment>
<comment type="catalytic activity">
    <reaction evidence="1">
        <text>L-glutamate = D-glutamate</text>
        <dbReference type="Rhea" id="RHEA:12813"/>
        <dbReference type="ChEBI" id="CHEBI:29985"/>
        <dbReference type="ChEBI" id="CHEBI:29986"/>
        <dbReference type="EC" id="5.1.1.3"/>
    </reaction>
</comment>
<comment type="pathway">
    <text evidence="1">Cell wall biogenesis; peptidoglycan biosynthesis.</text>
</comment>
<comment type="similarity">
    <text evidence="1">Belongs to the aspartate/glutamate racemases family.</text>
</comment>
<proteinExistence type="evidence at protein level"/>
<keyword id="KW-0133">Cell shape</keyword>
<keyword id="KW-0961">Cell wall biogenesis/degradation</keyword>
<keyword id="KW-0413">Isomerase</keyword>
<keyword id="KW-0573">Peptidoglycan synthesis</keyword>
<keyword id="KW-1185">Reference proteome</keyword>
<accession>O05412</accession>
<name>MURI2_BACSU</name>
<evidence type="ECO:0000255" key="1">
    <source>
        <dbReference type="HAMAP-Rule" id="MF_00258"/>
    </source>
</evidence>
<dbReference type="EC" id="5.1.1.3" evidence="1"/>
<dbReference type="EMBL" id="U93875">
    <property type="protein sequence ID" value="AAB80890.1"/>
    <property type="molecule type" value="Genomic_DNA"/>
</dbReference>
<dbReference type="EMBL" id="AL009126">
    <property type="protein sequence ID" value="CAB14622.1"/>
    <property type="molecule type" value="Genomic_DNA"/>
</dbReference>
<dbReference type="PIR" id="C69978">
    <property type="entry name" value="C69978"/>
</dbReference>
<dbReference type="SMR" id="O05412"/>
<dbReference type="FunCoup" id="O05412">
    <property type="interactions" value="34"/>
</dbReference>
<dbReference type="STRING" id="224308.BSU26810"/>
<dbReference type="PaxDb" id="224308-BSU26810"/>
<dbReference type="DNASU" id="937619"/>
<dbReference type="EnsemblBacteria" id="CAB14622">
    <property type="protein sequence ID" value="CAB14622"/>
    <property type="gene ID" value="BSU_26810"/>
</dbReference>
<dbReference type="GeneID" id="937619"/>
<dbReference type="KEGG" id="bsu:BSU26810"/>
<dbReference type="PATRIC" id="fig|224308.179.peg.2912"/>
<dbReference type="eggNOG" id="COG0796">
    <property type="taxonomic scope" value="Bacteria"/>
</dbReference>
<dbReference type="InParanoid" id="O05412"/>
<dbReference type="OrthoDB" id="9801055at2"/>
<dbReference type="PhylomeDB" id="O05412"/>
<dbReference type="BioCyc" id="BSUB:BSU26810-MONOMER"/>
<dbReference type="UniPathway" id="UPA00219"/>
<dbReference type="Proteomes" id="UP000001570">
    <property type="component" value="Chromosome"/>
</dbReference>
<dbReference type="GO" id="GO:0047661">
    <property type="term" value="F:amino-acid racemase activity"/>
    <property type="evidence" value="ECO:0000318"/>
    <property type="project" value="GO_Central"/>
</dbReference>
<dbReference type="GO" id="GO:0008881">
    <property type="term" value="F:glutamate racemase activity"/>
    <property type="evidence" value="ECO:0007669"/>
    <property type="project" value="UniProtKB-UniRule"/>
</dbReference>
<dbReference type="GO" id="GO:0071555">
    <property type="term" value="P:cell wall organization"/>
    <property type="evidence" value="ECO:0007669"/>
    <property type="project" value="UniProtKB-KW"/>
</dbReference>
<dbReference type="GO" id="GO:0009252">
    <property type="term" value="P:peptidoglycan biosynthetic process"/>
    <property type="evidence" value="ECO:0000318"/>
    <property type="project" value="GO_Central"/>
</dbReference>
<dbReference type="GO" id="GO:0008360">
    <property type="term" value="P:regulation of cell shape"/>
    <property type="evidence" value="ECO:0007669"/>
    <property type="project" value="UniProtKB-KW"/>
</dbReference>
<dbReference type="FunFam" id="3.40.50.1860:FF:000002">
    <property type="entry name" value="Glutamate racemase"/>
    <property type="match status" value="1"/>
</dbReference>
<dbReference type="Gene3D" id="3.40.50.1860">
    <property type="match status" value="2"/>
</dbReference>
<dbReference type="HAMAP" id="MF_00258">
    <property type="entry name" value="Glu_racemase"/>
    <property type="match status" value="1"/>
</dbReference>
<dbReference type="InterPro" id="IPR015942">
    <property type="entry name" value="Asp/Glu/hydantoin_racemase"/>
</dbReference>
<dbReference type="InterPro" id="IPR001920">
    <property type="entry name" value="Asp/Glu_race"/>
</dbReference>
<dbReference type="InterPro" id="IPR018187">
    <property type="entry name" value="Asp/Glu_racemase_AS_1"/>
</dbReference>
<dbReference type="InterPro" id="IPR004391">
    <property type="entry name" value="Glu_race"/>
</dbReference>
<dbReference type="NCBIfam" id="TIGR00067">
    <property type="entry name" value="glut_race"/>
    <property type="match status" value="1"/>
</dbReference>
<dbReference type="PANTHER" id="PTHR21198">
    <property type="entry name" value="GLUTAMATE RACEMASE"/>
    <property type="match status" value="1"/>
</dbReference>
<dbReference type="PANTHER" id="PTHR21198:SF3">
    <property type="entry name" value="GLUTAMATE RACEMASE"/>
    <property type="match status" value="1"/>
</dbReference>
<dbReference type="Pfam" id="PF01177">
    <property type="entry name" value="Asp_Glu_race"/>
    <property type="match status" value="1"/>
</dbReference>
<dbReference type="SUPFAM" id="SSF53681">
    <property type="entry name" value="Aspartate/glutamate racemase"/>
    <property type="match status" value="2"/>
</dbReference>
<dbReference type="PROSITE" id="PS00923">
    <property type="entry name" value="ASP_GLU_RACEMASE_1"/>
    <property type="match status" value="1"/>
</dbReference>
<reference key="1">
    <citation type="journal article" date="1997" name="Microbiology">
        <title>Sequence of the Bacillus subtilis genome region in the vicinity of the lev operon reveals two new extracytoplasmic function RNA polymerase sigma factors SigV and SigZ.</title>
        <authorList>
            <person name="Sorokin A."/>
            <person name="Bolotin A."/>
            <person name="Purnelle B."/>
            <person name="Hilbert H."/>
            <person name="Lauber J."/>
            <person name="Duesterhoeft A."/>
            <person name="Ehrlich S.D."/>
        </authorList>
    </citation>
    <scope>NUCLEOTIDE SEQUENCE [GENOMIC DNA]</scope>
    <source>
        <strain>168</strain>
    </source>
</reference>
<reference key="2">
    <citation type="journal article" date="1997" name="Nature">
        <title>The complete genome sequence of the Gram-positive bacterium Bacillus subtilis.</title>
        <authorList>
            <person name="Kunst F."/>
            <person name="Ogasawara N."/>
            <person name="Moszer I."/>
            <person name="Albertini A.M."/>
            <person name="Alloni G."/>
            <person name="Azevedo V."/>
            <person name="Bertero M.G."/>
            <person name="Bessieres P."/>
            <person name="Bolotin A."/>
            <person name="Borchert S."/>
            <person name="Borriss R."/>
            <person name="Boursier L."/>
            <person name="Brans A."/>
            <person name="Braun M."/>
            <person name="Brignell S.C."/>
            <person name="Bron S."/>
            <person name="Brouillet S."/>
            <person name="Bruschi C.V."/>
            <person name="Caldwell B."/>
            <person name="Capuano V."/>
            <person name="Carter N.M."/>
            <person name="Choi S.-K."/>
            <person name="Codani J.-J."/>
            <person name="Connerton I.F."/>
            <person name="Cummings N.J."/>
            <person name="Daniel R.A."/>
            <person name="Denizot F."/>
            <person name="Devine K.M."/>
            <person name="Duesterhoeft A."/>
            <person name="Ehrlich S.D."/>
            <person name="Emmerson P.T."/>
            <person name="Entian K.-D."/>
            <person name="Errington J."/>
            <person name="Fabret C."/>
            <person name="Ferrari E."/>
            <person name="Foulger D."/>
            <person name="Fritz C."/>
            <person name="Fujita M."/>
            <person name="Fujita Y."/>
            <person name="Fuma S."/>
            <person name="Galizzi A."/>
            <person name="Galleron N."/>
            <person name="Ghim S.-Y."/>
            <person name="Glaser P."/>
            <person name="Goffeau A."/>
            <person name="Golightly E.J."/>
            <person name="Grandi G."/>
            <person name="Guiseppi G."/>
            <person name="Guy B.J."/>
            <person name="Haga K."/>
            <person name="Haiech J."/>
            <person name="Harwood C.R."/>
            <person name="Henaut A."/>
            <person name="Hilbert H."/>
            <person name="Holsappel S."/>
            <person name="Hosono S."/>
            <person name="Hullo M.-F."/>
            <person name="Itaya M."/>
            <person name="Jones L.-M."/>
            <person name="Joris B."/>
            <person name="Karamata D."/>
            <person name="Kasahara Y."/>
            <person name="Klaerr-Blanchard M."/>
            <person name="Klein C."/>
            <person name="Kobayashi Y."/>
            <person name="Koetter P."/>
            <person name="Koningstein G."/>
            <person name="Krogh S."/>
            <person name="Kumano M."/>
            <person name="Kurita K."/>
            <person name="Lapidus A."/>
            <person name="Lardinois S."/>
            <person name="Lauber J."/>
            <person name="Lazarevic V."/>
            <person name="Lee S.-M."/>
            <person name="Levine A."/>
            <person name="Liu H."/>
            <person name="Masuda S."/>
            <person name="Mauel C."/>
            <person name="Medigue C."/>
            <person name="Medina N."/>
            <person name="Mellado R.P."/>
            <person name="Mizuno M."/>
            <person name="Moestl D."/>
            <person name="Nakai S."/>
            <person name="Noback M."/>
            <person name="Noone D."/>
            <person name="O'Reilly M."/>
            <person name="Ogawa K."/>
            <person name="Ogiwara A."/>
            <person name="Oudega B."/>
            <person name="Park S.-H."/>
            <person name="Parro V."/>
            <person name="Pohl T.M."/>
            <person name="Portetelle D."/>
            <person name="Porwollik S."/>
            <person name="Prescott A.M."/>
            <person name="Presecan E."/>
            <person name="Pujic P."/>
            <person name="Purnelle B."/>
            <person name="Rapoport G."/>
            <person name="Rey M."/>
            <person name="Reynolds S."/>
            <person name="Rieger M."/>
            <person name="Rivolta C."/>
            <person name="Rocha E."/>
            <person name="Roche B."/>
            <person name="Rose M."/>
            <person name="Sadaie Y."/>
            <person name="Sato T."/>
            <person name="Scanlan E."/>
            <person name="Schleich S."/>
            <person name="Schroeter R."/>
            <person name="Scoffone F."/>
            <person name="Sekiguchi J."/>
            <person name="Sekowska A."/>
            <person name="Seror S.J."/>
            <person name="Serror P."/>
            <person name="Shin B.-S."/>
            <person name="Soldo B."/>
            <person name="Sorokin A."/>
            <person name="Tacconi E."/>
            <person name="Takagi T."/>
            <person name="Takahashi H."/>
            <person name="Takemaru K."/>
            <person name="Takeuchi M."/>
            <person name="Tamakoshi A."/>
            <person name="Tanaka T."/>
            <person name="Terpstra P."/>
            <person name="Tognoni A."/>
            <person name="Tosato V."/>
            <person name="Uchiyama S."/>
            <person name="Vandenbol M."/>
            <person name="Vannier F."/>
            <person name="Vassarotti A."/>
            <person name="Viari A."/>
            <person name="Wambutt R."/>
            <person name="Wedler E."/>
            <person name="Wedler H."/>
            <person name="Weitzenegger T."/>
            <person name="Winters P."/>
            <person name="Wipat A."/>
            <person name="Yamamoto H."/>
            <person name="Yamane K."/>
            <person name="Yasumoto K."/>
            <person name="Yata K."/>
            <person name="Yoshida K."/>
            <person name="Yoshikawa H.-F."/>
            <person name="Zumstein E."/>
            <person name="Yoshikawa H."/>
            <person name="Danchin A."/>
        </authorList>
    </citation>
    <scope>NUCLEOTIDE SEQUENCE [LARGE SCALE GENOMIC DNA]</scope>
    <source>
        <strain>168</strain>
    </source>
</reference>
<reference key="3">
    <citation type="journal article" date="1999" name="Biosci. Biotechnol. Biochem.">
        <title>Characterization of yrpC gene product of Bacillus subtilis IFO 3336 as glutamate racemase isozyme.</title>
        <authorList>
            <person name="Ashiuchi M."/>
            <person name="Soda K."/>
            <person name="Misono H."/>
        </authorList>
    </citation>
    <scope>CHARACTERIZATION</scope>
</reference>
<sequence>MKIGFFDSGIGGMTVLYEAIKVLPYEDYIFYADTLNVPYGEKSKGKVKEYIFNAAEFLASQNIKALVIACNTATSIAIEDLRRNFDFPIIGIEPAVKPAINKCTEERKRVLVVATNLTLKEEKFHNLVKEIDHHDLVDCLALPGLVEFAENFDFSEDKIIKYLKNELSSFDLKQYGTIVLGCTHFPFFKNSFEKLFGIKVDMISGSVGTAKQLKKVLADRNQLGKGSGSITFFNSGHKIVDQEVISKYKRLFEILDETQRSHVGH</sequence>
<gene>
    <name type="primary">yrpC</name>
    <name type="ordered locus">BSU26810</name>
</gene>
<protein>
    <recommendedName>
        <fullName evidence="1">Glutamate racemase 2</fullName>
        <ecNumber evidence="1">5.1.1.3</ecNumber>
    </recommendedName>
</protein>
<organism>
    <name type="scientific">Bacillus subtilis (strain 168)</name>
    <dbReference type="NCBI Taxonomy" id="224308"/>
    <lineage>
        <taxon>Bacteria</taxon>
        <taxon>Bacillati</taxon>
        <taxon>Bacillota</taxon>
        <taxon>Bacilli</taxon>
        <taxon>Bacillales</taxon>
        <taxon>Bacillaceae</taxon>
        <taxon>Bacillus</taxon>
    </lineage>
</organism>